<comment type="subunit">
    <text evidence="2">Component of the mitochondrial ribosome large subunit (39S) which comprises a 16S rRNA and about 50 distinct proteins. Component of the mitochondrial ribosome small subunit (28S) which comprises a 12S rRNA and about 30 distinct proteins.</text>
</comment>
<comment type="subcellular location">
    <subcellularLocation>
        <location evidence="2">Mitochondrion</location>
    </subcellularLocation>
</comment>
<comment type="similarity">
    <text evidence="3">Belongs to the mitochondrion-specific ribosomal protein mL42 family.</text>
</comment>
<comment type="caution">
    <text evidence="3">Has been found in the mitochondrial ribosome large and small subunits.</text>
</comment>
<dbReference type="EMBL" id="BC109670">
    <property type="protein sequence ID" value="AAI09671.1"/>
    <property type="molecule type" value="mRNA"/>
</dbReference>
<dbReference type="RefSeq" id="NP_001032711.1">
    <property type="nucleotide sequence ID" value="NM_001037622.2"/>
</dbReference>
<dbReference type="RefSeq" id="XP_005206174.1">
    <property type="nucleotide sequence ID" value="XM_005206117.5"/>
</dbReference>
<dbReference type="RefSeq" id="XP_005206175.1">
    <property type="nucleotide sequence ID" value="XM_005206118.5"/>
</dbReference>
<dbReference type="RefSeq" id="XP_005206176.1">
    <property type="nucleotide sequence ID" value="XM_005206119.5"/>
</dbReference>
<dbReference type="SMR" id="P82927"/>
<dbReference type="CORUM" id="P82927"/>
<dbReference type="FunCoup" id="P82927">
    <property type="interactions" value="1386"/>
</dbReference>
<dbReference type="IntAct" id="P82927">
    <property type="interactions" value="1"/>
</dbReference>
<dbReference type="STRING" id="9913.ENSBTAP00000003506"/>
<dbReference type="PaxDb" id="9913-ENSBTAP00000003506"/>
<dbReference type="Ensembl" id="ENSBTAT00000003506.6">
    <property type="protein sequence ID" value="ENSBTAP00000003506.5"/>
    <property type="gene ID" value="ENSBTAG00000002708.7"/>
</dbReference>
<dbReference type="GeneID" id="614148"/>
<dbReference type="KEGG" id="bta:614148"/>
<dbReference type="CTD" id="28977"/>
<dbReference type="VEuPathDB" id="HostDB:ENSBTAG00000002708"/>
<dbReference type="VGNC" id="VGNC:31638">
    <property type="gene designation" value="MRPL42"/>
</dbReference>
<dbReference type="eggNOG" id="KOG4106">
    <property type="taxonomic scope" value="Eukaryota"/>
</dbReference>
<dbReference type="GeneTree" id="ENSGT00390000010491"/>
<dbReference type="HOGENOM" id="CLU_142926_1_0_1"/>
<dbReference type="InParanoid" id="P82927"/>
<dbReference type="OMA" id="MASGHLC"/>
<dbReference type="OrthoDB" id="1107506at2759"/>
<dbReference type="TreeFam" id="TF324368"/>
<dbReference type="Reactome" id="R-BTA-5389840">
    <property type="pathway name" value="Mitochondrial translation elongation"/>
</dbReference>
<dbReference type="Reactome" id="R-BTA-5419276">
    <property type="pathway name" value="Mitochondrial translation termination"/>
</dbReference>
<dbReference type="Proteomes" id="UP000009136">
    <property type="component" value="Chromosome 5"/>
</dbReference>
<dbReference type="Bgee" id="ENSBTAG00000002708">
    <property type="expression patterns" value="Expressed in spermatid and 108 other cell types or tissues"/>
</dbReference>
<dbReference type="GO" id="GO:0005743">
    <property type="term" value="C:mitochondrial inner membrane"/>
    <property type="evidence" value="ECO:0000304"/>
    <property type="project" value="Reactome"/>
</dbReference>
<dbReference type="GO" id="GO:0005762">
    <property type="term" value="C:mitochondrial large ribosomal subunit"/>
    <property type="evidence" value="ECO:0000250"/>
    <property type="project" value="UniProtKB"/>
</dbReference>
<dbReference type="GO" id="GO:0005763">
    <property type="term" value="C:mitochondrial small ribosomal subunit"/>
    <property type="evidence" value="ECO:0007669"/>
    <property type="project" value="Ensembl"/>
</dbReference>
<dbReference type="GO" id="GO:0005886">
    <property type="term" value="C:plasma membrane"/>
    <property type="evidence" value="ECO:0007669"/>
    <property type="project" value="Ensembl"/>
</dbReference>
<dbReference type="InterPro" id="IPR019346">
    <property type="entry name" value="Ribosomal_mL42"/>
</dbReference>
<dbReference type="PANTHER" id="PTHR13450:SF4">
    <property type="entry name" value="LARGE RIBOSOMAL SUBUNIT PROTEIN ML42"/>
    <property type="match status" value="1"/>
</dbReference>
<dbReference type="PANTHER" id="PTHR13450">
    <property type="entry name" value="MITOCHONDRIAL 39S RIBOSOMAL PROTEIN L42"/>
    <property type="match status" value="1"/>
</dbReference>
<dbReference type="Pfam" id="PF10210">
    <property type="entry name" value="MRP-S32"/>
    <property type="match status" value="1"/>
</dbReference>
<sequence>MALAAVKWAISSRTMLKHLFPVENGALYCVGHKSTYSSLPDDYNCKVELALTSDARTIVCYHPSVDIPYEHTKPIPRPDPVHNNEETHDLVLKTRLEEKSEHLEQGPMIEQLSKMFFTTKHRWYPRGQYHRRRRKLNPPKDR</sequence>
<protein>
    <recommendedName>
        <fullName evidence="3">Large ribosomal subunit protein mL42</fullName>
    </recommendedName>
    <alternativeName>
        <fullName>28S ribosomal protein S32, mitochondrial</fullName>
        <shortName>MRP-S32</shortName>
        <shortName>S32mt</shortName>
    </alternativeName>
    <alternativeName>
        <fullName>39S ribosomal protein L42, mitochondrial</fullName>
        <shortName>L42mt</shortName>
        <shortName>MRP-L42</shortName>
    </alternativeName>
</protein>
<reference key="1">
    <citation type="submission" date="2005-11" db="EMBL/GenBank/DDBJ databases">
        <authorList>
            <consortium name="NIH - Mammalian Gene Collection (MGC) project"/>
        </authorList>
    </citation>
    <scope>NUCLEOTIDE SEQUENCE [LARGE SCALE MRNA]</scope>
    <source>
        <strain>Crossbred X Angus</strain>
        <tissue>Liver</tissue>
    </source>
</reference>
<reference evidence="3" key="2">
    <citation type="journal article" date="2001" name="J. Biol. Chem.">
        <title>The small subunit of the mammalian mitochondrial ribosome: identification of the full complement of ribosomal proteins present.</title>
        <authorList>
            <person name="Koc E.C."/>
            <person name="Burkhart W."/>
            <person name="Blackburn K."/>
            <person name="Moseley A."/>
            <person name="Spremulli L.L."/>
        </authorList>
    </citation>
    <scope>PROTEIN SEQUENCE OF 100-114</scope>
    <scope>SUBUNIT</scope>
    <scope>SUBCELLULAR LOCATION</scope>
    <source>
        <tissue>Liver</tissue>
    </source>
</reference>
<keyword id="KW-0903">Direct protein sequencing</keyword>
<keyword id="KW-0496">Mitochondrion</keyword>
<keyword id="KW-1185">Reference proteome</keyword>
<keyword id="KW-0687">Ribonucleoprotein</keyword>
<keyword id="KW-0689">Ribosomal protein</keyword>
<keyword id="KW-0809">Transit peptide</keyword>
<organism evidence="3">
    <name type="scientific">Bos taurus</name>
    <name type="common">Bovine</name>
    <dbReference type="NCBI Taxonomy" id="9913"/>
    <lineage>
        <taxon>Eukaryota</taxon>
        <taxon>Metazoa</taxon>
        <taxon>Chordata</taxon>
        <taxon>Craniata</taxon>
        <taxon>Vertebrata</taxon>
        <taxon>Euteleostomi</taxon>
        <taxon>Mammalia</taxon>
        <taxon>Eutheria</taxon>
        <taxon>Laurasiatheria</taxon>
        <taxon>Artiodactyla</taxon>
        <taxon>Ruminantia</taxon>
        <taxon>Pecora</taxon>
        <taxon>Bovidae</taxon>
        <taxon>Bovinae</taxon>
        <taxon>Bos</taxon>
    </lineage>
</organism>
<evidence type="ECO:0000250" key="1"/>
<evidence type="ECO:0000269" key="2">
    <source>
    </source>
</evidence>
<evidence type="ECO:0000305" key="3"/>
<name>RM42_BOVIN</name>
<proteinExistence type="evidence at protein level"/>
<accession>P82927</accession>
<accession>Q32LA9</accession>
<gene>
    <name type="primary">MRPL42</name>
    <name type="synonym">MRPS32</name>
</gene>
<feature type="transit peptide" description="Mitochondrion" evidence="1">
    <location>
        <begin position="1"/>
        <end position="32"/>
    </location>
</feature>
<feature type="chain" id="PRO_0000087723" description="Large ribosomal subunit protein mL42">
    <location>
        <begin position="33"/>
        <end position="142"/>
    </location>
</feature>
<feature type="sequence conflict" description="In Ref. 2; AA sequence." evidence="3" ref="2">
    <original>EH</original>
    <variation>KQ</variation>
    <location>
        <begin position="101"/>
        <end position="102"/>
    </location>
</feature>
<feature type="sequence conflict" description="In Ref. 2; AA sequence." evidence="3" ref="2">
    <original>Q</original>
    <variation>H</variation>
    <location>
        <position position="105"/>
    </location>
</feature>